<keyword id="KW-0002">3D-structure</keyword>
<keyword id="KW-0963">Cytoplasm</keyword>
<keyword id="KW-1185">Reference proteome</keyword>
<keyword id="KW-0687">Ribonucleoprotein</keyword>
<keyword id="KW-0689">Ribosomal protein</keyword>
<gene>
    <name evidence="8" type="primary">RPS26A</name>
    <name type="synonym">RPS26</name>
    <name type="ordered locus">YGL189C</name>
    <name type="ORF">G1355</name>
</gene>
<dbReference type="EMBL" id="U10563">
    <property type="protein sequence ID" value="AAA66066.1"/>
    <property type="molecule type" value="Genomic_DNA"/>
</dbReference>
<dbReference type="EMBL" id="X91489">
    <property type="protein sequence ID" value="CAA62786.1"/>
    <property type="molecule type" value="Genomic_DNA"/>
</dbReference>
<dbReference type="EMBL" id="Z72711">
    <property type="protein sequence ID" value="CAA96901.1"/>
    <property type="molecule type" value="Genomic_DNA"/>
</dbReference>
<dbReference type="EMBL" id="EF123138">
    <property type="protein sequence ID" value="ABM97482.1"/>
    <property type="molecule type" value="mRNA"/>
</dbReference>
<dbReference type="EMBL" id="BK006941">
    <property type="protein sequence ID" value="DAA07926.1"/>
    <property type="molecule type" value="Genomic_DNA"/>
</dbReference>
<dbReference type="PIR" id="S47942">
    <property type="entry name" value="S47942"/>
</dbReference>
<dbReference type="RefSeq" id="NP_011326.1">
    <property type="nucleotide sequence ID" value="NM_001181054.1"/>
</dbReference>
<dbReference type="PDB" id="3J6X">
    <property type="method" value="EM"/>
    <property type="resolution" value="6.10 A"/>
    <property type="chains" value="26=1-119"/>
</dbReference>
<dbReference type="PDB" id="3J6Y">
    <property type="method" value="EM"/>
    <property type="resolution" value="6.10 A"/>
    <property type="chains" value="26=1-119"/>
</dbReference>
<dbReference type="PDB" id="3J77">
    <property type="method" value="EM"/>
    <property type="resolution" value="6.20 A"/>
    <property type="chains" value="26=1-119"/>
</dbReference>
<dbReference type="PDB" id="3J78">
    <property type="method" value="EM"/>
    <property type="resolution" value="6.30 A"/>
    <property type="chains" value="26=1-119"/>
</dbReference>
<dbReference type="PDB" id="4V88">
    <property type="method" value="X-ray"/>
    <property type="resolution" value="3.00 A"/>
    <property type="chains" value="Aa/Ca=1-119"/>
</dbReference>
<dbReference type="PDB" id="4V8Y">
    <property type="method" value="EM"/>
    <property type="resolution" value="4.30 A"/>
    <property type="chains" value="A0=1-119"/>
</dbReference>
<dbReference type="PDB" id="4V8Z">
    <property type="method" value="EM"/>
    <property type="resolution" value="6.60 A"/>
    <property type="chains" value="A0=1-119"/>
</dbReference>
<dbReference type="PDB" id="4V92">
    <property type="method" value="EM"/>
    <property type="resolution" value="3.70 A"/>
    <property type="chains" value="a=2-98"/>
</dbReference>
<dbReference type="PDB" id="5DGE">
    <property type="method" value="X-ray"/>
    <property type="resolution" value="3.45 A"/>
    <property type="chains" value="D6/d6=2-98"/>
</dbReference>
<dbReference type="PDB" id="5FCI">
    <property type="method" value="X-ray"/>
    <property type="resolution" value="3.40 A"/>
    <property type="chains" value="D6/d6=2-98"/>
</dbReference>
<dbReference type="PDB" id="5JUO">
    <property type="method" value="EM"/>
    <property type="resolution" value="4.00 A"/>
    <property type="chains" value="XB=1-119"/>
</dbReference>
<dbReference type="PDB" id="5JUP">
    <property type="method" value="EM"/>
    <property type="resolution" value="3.50 A"/>
    <property type="chains" value="XB=1-119"/>
</dbReference>
<dbReference type="PDB" id="5JUS">
    <property type="method" value="EM"/>
    <property type="resolution" value="4.20 A"/>
    <property type="chains" value="XB=1-119"/>
</dbReference>
<dbReference type="PDB" id="5JUT">
    <property type="method" value="EM"/>
    <property type="resolution" value="4.00 A"/>
    <property type="chains" value="XB=1-119"/>
</dbReference>
<dbReference type="PDB" id="5JUU">
    <property type="method" value="EM"/>
    <property type="resolution" value="4.00 A"/>
    <property type="chains" value="XB=1-119"/>
</dbReference>
<dbReference type="PDB" id="5LL6">
    <property type="method" value="EM"/>
    <property type="resolution" value="3.90 A"/>
    <property type="chains" value="e=1-119"/>
</dbReference>
<dbReference type="PDB" id="5MC6">
    <property type="method" value="EM"/>
    <property type="resolution" value="3.80 A"/>
    <property type="chains" value="e=1-119"/>
</dbReference>
<dbReference type="PDB" id="6G04">
    <property type="method" value="NMR"/>
    <property type="chains" value="B=100-119"/>
</dbReference>
<dbReference type="PDB" id="6SNT">
    <property type="method" value="EM"/>
    <property type="resolution" value="2.80 A"/>
    <property type="chains" value="a=1-119"/>
</dbReference>
<dbReference type="PDB" id="6SV4">
    <property type="method" value="EM"/>
    <property type="resolution" value="3.30 A"/>
    <property type="chains" value="e/eb/ec=1-119"/>
</dbReference>
<dbReference type="PDB" id="6T7I">
    <property type="method" value="EM"/>
    <property type="resolution" value="3.20 A"/>
    <property type="chains" value="Sa=1-119"/>
</dbReference>
<dbReference type="PDB" id="6T7T">
    <property type="method" value="EM"/>
    <property type="resolution" value="3.10 A"/>
    <property type="chains" value="Sa=1-119"/>
</dbReference>
<dbReference type="PDB" id="6T83">
    <property type="method" value="EM"/>
    <property type="resolution" value="4.00 A"/>
    <property type="chains" value="1/ab=1-119"/>
</dbReference>
<dbReference type="PDB" id="6ZCE">
    <property type="method" value="EM"/>
    <property type="resolution" value="5.30 A"/>
    <property type="chains" value="b=1-119"/>
</dbReference>
<dbReference type="PDB" id="6ZU9">
    <property type="method" value="EM"/>
    <property type="resolution" value="6.20 A"/>
    <property type="chains" value="e=1-119"/>
</dbReference>
<dbReference type="PDB" id="7MPJ">
    <property type="method" value="EM"/>
    <property type="resolution" value="2.70 A"/>
    <property type="chains" value="Ba=2-98"/>
</dbReference>
<dbReference type="PDB" id="7ZUW">
    <property type="method" value="EM"/>
    <property type="resolution" value="4.30 A"/>
    <property type="chains" value="Aa=2-98"/>
</dbReference>
<dbReference type="PDB" id="7ZW0">
    <property type="method" value="EM"/>
    <property type="resolution" value="2.40 A"/>
    <property type="chains" value="se=1-119"/>
</dbReference>
<dbReference type="PDB" id="8BQD">
    <property type="method" value="EM"/>
    <property type="resolution" value="3.90 A"/>
    <property type="chains" value="e=2-98"/>
</dbReference>
<dbReference type="PDB" id="8CAH">
    <property type="method" value="EM"/>
    <property type="resolution" value="3.00 A"/>
    <property type="chains" value="e=1-119"/>
</dbReference>
<dbReference type="PDB" id="8CAS">
    <property type="method" value="EM"/>
    <property type="resolution" value="3.30 A"/>
    <property type="chains" value="e=1-119"/>
</dbReference>
<dbReference type="PDB" id="8CCS">
    <property type="method" value="EM"/>
    <property type="resolution" value="1.97 A"/>
    <property type="chains" value="2=1-119"/>
</dbReference>
<dbReference type="PDB" id="8CDL">
    <property type="method" value="EM"/>
    <property type="resolution" value="2.72 A"/>
    <property type="chains" value="2=1-119"/>
</dbReference>
<dbReference type="PDB" id="8CDR">
    <property type="method" value="EM"/>
    <property type="resolution" value="2.04 A"/>
    <property type="chains" value="2=1-119"/>
</dbReference>
<dbReference type="PDB" id="8UTI">
    <property type="method" value="EM"/>
    <property type="resolution" value="3.13 A"/>
    <property type="chains" value="Se=2-98"/>
</dbReference>
<dbReference type="PDB" id="8XU8">
    <property type="method" value="EM"/>
    <property type="resolution" value="3.40 A"/>
    <property type="chains" value="Se=2-95"/>
</dbReference>
<dbReference type="PDB" id="8YLD">
    <property type="method" value="EM"/>
    <property type="resolution" value="3.90 A"/>
    <property type="chains" value="Se=2-95"/>
</dbReference>
<dbReference type="PDB" id="8YLR">
    <property type="method" value="EM"/>
    <property type="resolution" value="3.90 A"/>
    <property type="chains" value="Se=2-95"/>
</dbReference>
<dbReference type="PDB" id="8Z70">
    <property type="method" value="EM"/>
    <property type="resolution" value="3.20 A"/>
    <property type="chains" value="Se=2-95"/>
</dbReference>
<dbReference type="PDB" id="8Z71">
    <property type="method" value="EM"/>
    <property type="resolution" value="3.60 A"/>
    <property type="chains" value="Se=2-95"/>
</dbReference>
<dbReference type="PDB" id="9F9S">
    <property type="method" value="EM"/>
    <property type="resolution" value="2.90 A"/>
    <property type="chains" value="RA/SA=1-119"/>
</dbReference>
<dbReference type="PDBsum" id="3J6X"/>
<dbReference type="PDBsum" id="3J6Y"/>
<dbReference type="PDBsum" id="3J77"/>
<dbReference type="PDBsum" id="3J78"/>
<dbReference type="PDBsum" id="4V88"/>
<dbReference type="PDBsum" id="4V8Y"/>
<dbReference type="PDBsum" id="4V8Z"/>
<dbReference type="PDBsum" id="4V92"/>
<dbReference type="PDBsum" id="5DGE"/>
<dbReference type="PDBsum" id="5FCI"/>
<dbReference type="PDBsum" id="5JUO"/>
<dbReference type="PDBsum" id="5JUP"/>
<dbReference type="PDBsum" id="5JUS"/>
<dbReference type="PDBsum" id="5JUT"/>
<dbReference type="PDBsum" id="5JUU"/>
<dbReference type="PDBsum" id="5LL6"/>
<dbReference type="PDBsum" id="5MC6"/>
<dbReference type="PDBsum" id="6G04"/>
<dbReference type="PDBsum" id="6SNT"/>
<dbReference type="PDBsum" id="6SV4"/>
<dbReference type="PDBsum" id="6T7I"/>
<dbReference type="PDBsum" id="6T7T"/>
<dbReference type="PDBsum" id="6T83"/>
<dbReference type="PDBsum" id="6ZCE"/>
<dbReference type="PDBsum" id="6ZU9"/>
<dbReference type="PDBsum" id="7MPJ"/>
<dbReference type="PDBsum" id="7ZUW"/>
<dbReference type="PDBsum" id="7ZW0"/>
<dbReference type="PDBsum" id="8BQD"/>
<dbReference type="PDBsum" id="8CAH"/>
<dbReference type="PDBsum" id="8CAS"/>
<dbReference type="PDBsum" id="8CCS"/>
<dbReference type="PDBsum" id="8CDL"/>
<dbReference type="PDBsum" id="8CDR"/>
<dbReference type="PDBsum" id="8UTI"/>
<dbReference type="PDBsum" id="8XU8"/>
<dbReference type="PDBsum" id="8YLD"/>
<dbReference type="PDBsum" id="8YLR"/>
<dbReference type="PDBsum" id="8Z70"/>
<dbReference type="PDBsum" id="8Z71"/>
<dbReference type="PDBsum" id="9F9S"/>
<dbReference type="EMDB" id="EMD-10315"/>
<dbReference type="EMDB" id="EMD-10396"/>
<dbReference type="EMDB" id="EMD-10398"/>
<dbReference type="EMDB" id="EMD-11439"/>
<dbReference type="EMDB" id="EMD-14990"/>
<dbReference type="EMDB" id="EMD-16533"/>
<dbReference type="EMDB" id="EMD-23935"/>
<dbReference type="EMDB" id="EMD-38660"/>
<dbReference type="EMDB" id="EMD-42525"/>
<dbReference type="EMDB" id="EMD-42540"/>
<dbReference type="EMDB" id="EMD-50259"/>
<dbReference type="SMR" id="P39938"/>
<dbReference type="BioGRID" id="33067">
    <property type="interactions" value="139"/>
</dbReference>
<dbReference type="ComplexPortal" id="CPX-1599">
    <property type="entry name" value="40S cytosolic small ribosomal subunit"/>
</dbReference>
<dbReference type="DIP" id="DIP-1396N"/>
<dbReference type="FunCoup" id="P39938">
    <property type="interactions" value="929"/>
</dbReference>
<dbReference type="IntAct" id="P39938">
    <property type="interactions" value="56"/>
</dbReference>
<dbReference type="MINT" id="P39938"/>
<dbReference type="STRING" id="4932.YGL189C"/>
<dbReference type="iPTMnet" id="P39938"/>
<dbReference type="PaxDb" id="4932-YGL189C"/>
<dbReference type="PeptideAtlas" id="P39938"/>
<dbReference type="EnsemblFungi" id="YGL189C_mRNA">
    <property type="protein sequence ID" value="YGL189C"/>
    <property type="gene ID" value="YGL189C"/>
</dbReference>
<dbReference type="GeneID" id="852686"/>
<dbReference type="KEGG" id="sce:YGL189C"/>
<dbReference type="AGR" id="SGD:S000003157"/>
<dbReference type="SGD" id="S000003157">
    <property type="gene designation" value="RPS26A"/>
</dbReference>
<dbReference type="VEuPathDB" id="FungiDB:YGL189C"/>
<dbReference type="eggNOG" id="KOG1768">
    <property type="taxonomic scope" value="Eukaryota"/>
</dbReference>
<dbReference type="GeneTree" id="ENSGT00390000002517"/>
<dbReference type="HOGENOM" id="CLU_129451_2_0_1"/>
<dbReference type="InParanoid" id="P39938"/>
<dbReference type="OMA" id="RSHWERK"/>
<dbReference type="OrthoDB" id="10262653at2759"/>
<dbReference type="BioCyc" id="YEAST:G3O-30672-MONOMER"/>
<dbReference type="Reactome" id="R-SCE-156827">
    <property type="pathway name" value="L13a-mediated translational silencing of Ceruloplasmin expression"/>
</dbReference>
<dbReference type="Reactome" id="R-SCE-1799339">
    <property type="pathway name" value="SRP-dependent cotranslational protein targeting to membrane"/>
</dbReference>
<dbReference type="Reactome" id="R-SCE-72649">
    <property type="pathway name" value="Translation initiation complex formation"/>
</dbReference>
<dbReference type="Reactome" id="R-SCE-72689">
    <property type="pathway name" value="Formation of a pool of free 40S subunits"/>
</dbReference>
<dbReference type="Reactome" id="R-SCE-72695">
    <property type="pathway name" value="Formation of the ternary complex, and subsequently, the 43S complex"/>
</dbReference>
<dbReference type="Reactome" id="R-SCE-72702">
    <property type="pathway name" value="Ribosomal scanning and start codon recognition"/>
</dbReference>
<dbReference type="Reactome" id="R-SCE-72706">
    <property type="pathway name" value="GTP hydrolysis and joining of the 60S ribosomal subunit"/>
</dbReference>
<dbReference type="Reactome" id="R-SCE-975956">
    <property type="pathway name" value="Nonsense Mediated Decay (NMD) independent of the Exon Junction Complex (EJC)"/>
</dbReference>
<dbReference type="Reactome" id="R-SCE-975957">
    <property type="pathway name" value="Nonsense Mediated Decay (NMD) enhanced by the Exon Junction Complex (EJC)"/>
</dbReference>
<dbReference type="BioGRID-ORCS" id="852686">
    <property type="hits" value="5 hits in 10 CRISPR screens"/>
</dbReference>
<dbReference type="PRO" id="PR:P39938"/>
<dbReference type="Proteomes" id="UP000002311">
    <property type="component" value="Chromosome VII"/>
</dbReference>
<dbReference type="RNAct" id="P39938">
    <property type="molecule type" value="protein"/>
</dbReference>
<dbReference type="GO" id="GO:0030686">
    <property type="term" value="C:90S preribosome"/>
    <property type="evidence" value="ECO:0000353"/>
    <property type="project" value="SGD"/>
</dbReference>
<dbReference type="GO" id="GO:0005829">
    <property type="term" value="C:cytosol"/>
    <property type="evidence" value="ECO:0000304"/>
    <property type="project" value="Reactome"/>
</dbReference>
<dbReference type="GO" id="GO:0022627">
    <property type="term" value="C:cytosolic small ribosomal subunit"/>
    <property type="evidence" value="ECO:0000318"/>
    <property type="project" value="GO_Central"/>
</dbReference>
<dbReference type="GO" id="GO:0003729">
    <property type="term" value="F:mRNA binding"/>
    <property type="evidence" value="ECO:0000318"/>
    <property type="project" value="GO_Central"/>
</dbReference>
<dbReference type="GO" id="GO:0003735">
    <property type="term" value="F:structural constituent of ribosome"/>
    <property type="evidence" value="ECO:0000318"/>
    <property type="project" value="GO_Central"/>
</dbReference>
<dbReference type="GO" id="GO:0002181">
    <property type="term" value="P:cytoplasmic translation"/>
    <property type="evidence" value="ECO:0000303"/>
    <property type="project" value="SGD"/>
</dbReference>
<dbReference type="GO" id="GO:0000463">
    <property type="term" value="P:maturation of LSU-rRNA from tricistronic rRNA transcript (SSU-rRNA, 5.8S rRNA, LSU-rRNA)"/>
    <property type="evidence" value="ECO:0000315"/>
    <property type="project" value="SGD"/>
</dbReference>
<dbReference type="GO" id="GO:0000054">
    <property type="term" value="P:ribosomal subunit export from nucleus"/>
    <property type="evidence" value="ECO:0000316"/>
    <property type="project" value="SGD"/>
</dbReference>
<dbReference type="GO" id="GO:0042255">
    <property type="term" value="P:ribosome assembly"/>
    <property type="evidence" value="ECO:0000315"/>
    <property type="project" value="SGD"/>
</dbReference>
<dbReference type="FunFam" id="3.30.1740.20:FF:000001">
    <property type="entry name" value="40S ribosomal protein S26"/>
    <property type="match status" value="1"/>
</dbReference>
<dbReference type="Gene3D" id="3.30.1740.20">
    <property type="entry name" value="Ribosomal protein S26e"/>
    <property type="match status" value="1"/>
</dbReference>
<dbReference type="InterPro" id="IPR000892">
    <property type="entry name" value="Ribosomal_eS26"/>
</dbReference>
<dbReference type="InterPro" id="IPR047864">
    <property type="entry name" value="Ribosomal_eS26_CS"/>
</dbReference>
<dbReference type="InterPro" id="IPR038551">
    <property type="entry name" value="Ribosomal_eS26_sf"/>
</dbReference>
<dbReference type="PANTHER" id="PTHR12538">
    <property type="entry name" value="40S RIBOSOMAL PROTEIN S26"/>
    <property type="match status" value="1"/>
</dbReference>
<dbReference type="PANTHER" id="PTHR12538:SF0">
    <property type="entry name" value="40S RIBOSOMAL PROTEIN S26"/>
    <property type="match status" value="1"/>
</dbReference>
<dbReference type="Pfam" id="PF01283">
    <property type="entry name" value="Ribosomal_S26e"/>
    <property type="match status" value="1"/>
</dbReference>
<dbReference type="PROSITE" id="PS00733">
    <property type="entry name" value="RIBOSOMAL_S26E"/>
    <property type="match status" value="1"/>
</dbReference>
<proteinExistence type="evidence at protein level"/>
<reference key="1">
    <citation type="journal article" date="1994" name="Gene">
        <title>The Saccharomyces cerevisiae homologue of ribosomal protein S26.</title>
        <authorList>
            <person name="Wu M."/>
            <person name="Tan H."/>
        </authorList>
    </citation>
    <scope>NUCLEOTIDE SEQUENCE [GENOMIC DNA]</scope>
</reference>
<reference key="2">
    <citation type="journal article" date="1997" name="Yeast">
        <title>Sequencing of a 40.5 kb fragment located on the left arm of chromosome VII from Saccharomyces cerevisiae.</title>
        <authorList>
            <person name="Coglievina M."/>
            <person name="Klima R."/>
            <person name="Bertani I."/>
            <person name="Delneri D."/>
            <person name="Zaccaria P."/>
            <person name="Bruschi C.V."/>
        </authorList>
    </citation>
    <scope>NUCLEOTIDE SEQUENCE [GENOMIC DNA]</scope>
    <source>
        <strain>ATCC 96604 / S288c / FY1679</strain>
    </source>
</reference>
<reference key="3">
    <citation type="journal article" date="1997" name="Nature">
        <title>The nucleotide sequence of Saccharomyces cerevisiae chromosome VII.</title>
        <authorList>
            <person name="Tettelin H."/>
            <person name="Agostoni-Carbone M.L."/>
            <person name="Albermann K."/>
            <person name="Albers M."/>
            <person name="Arroyo J."/>
            <person name="Backes U."/>
            <person name="Barreiros T."/>
            <person name="Bertani I."/>
            <person name="Bjourson A.J."/>
            <person name="Brueckner M."/>
            <person name="Bruschi C.V."/>
            <person name="Carignani G."/>
            <person name="Castagnoli L."/>
            <person name="Cerdan E."/>
            <person name="Clemente M.L."/>
            <person name="Coblenz A."/>
            <person name="Coglievina M."/>
            <person name="Coissac E."/>
            <person name="Defoor E."/>
            <person name="Del Bino S."/>
            <person name="Delius H."/>
            <person name="Delneri D."/>
            <person name="de Wergifosse P."/>
            <person name="Dujon B."/>
            <person name="Durand P."/>
            <person name="Entian K.-D."/>
            <person name="Eraso P."/>
            <person name="Escribano V."/>
            <person name="Fabiani L."/>
            <person name="Fartmann B."/>
            <person name="Feroli F."/>
            <person name="Feuermann M."/>
            <person name="Frontali L."/>
            <person name="Garcia-Gonzalez M."/>
            <person name="Garcia-Saez M.I."/>
            <person name="Goffeau A."/>
            <person name="Guerreiro P."/>
            <person name="Hani J."/>
            <person name="Hansen M."/>
            <person name="Hebling U."/>
            <person name="Hernandez K."/>
            <person name="Heumann K."/>
            <person name="Hilger F."/>
            <person name="Hofmann B."/>
            <person name="Indge K.J."/>
            <person name="James C.M."/>
            <person name="Klima R."/>
            <person name="Koetter P."/>
            <person name="Kramer B."/>
            <person name="Kramer W."/>
            <person name="Lauquin G."/>
            <person name="Leuther H."/>
            <person name="Louis E.J."/>
            <person name="Maillier E."/>
            <person name="Marconi A."/>
            <person name="Martegani E."/>
            <person name="Mazon M.J."/>
            <person name="Mazzoni C."/>
            <person name="McReynolds A.D.K."/>
            <person name="Melchioretto P."/>
            <person name="Mewes H.-W."/>
            <person name="Minenkova O."/>
            <person name="Mueller-Auer S."/>
            <person name="Nawrocki A."/>
            <person name="Netter P."/>
            <person name="Neu R."/>
            <person name="Nombela C."/>
            <person name="Oliver S.G."/>
            <person name="Panzeri L."/>
            <person name="Paoluzi S."/>
            <person name="Plevani P."/>
            <person name="Portetelle D."/>
            <person name="Portillo F."/>
            <person name="Potier S."/>
            <person name="Purnelle B."/>
            <person name="Rieger M."/>
            <person name="Riles L."/>
            <person name="Rinaldi T."/>
            <person name="Robben J."/>
            <person name="Rodrigues-Pousada C."/>
            <person name="Rodriguez-Belmonte E."/>
            <person name="Rodriguez-Torres A.M."/>
            <person name="Rose M."/>
            <person name="Ruzzi M."/>
            <person name="Saliola M."/>
            <person name="Sanchez-Perez M."/>
            <person name="Schaefer B."/>
            <person name="Schaefer M."/>
            <person name="Scharfe M."/>
            <person name="Schmidheini T."/>
            <person name="Schreer A."/>
            <person name="Skala J."/>
            <person name="Souciet J.-L."/>
            <person name="Steensma H.Y."/>
            <person name="Talla E."/>
            <person name="Thierry A."/>
            <person name="Vandenbol M."/>
            <person name="van der Aart Q.J.M."/>
            <person name="Van Dyck L."/>
            <person name="Vanoni M."/>
            <person name="Verhasselt P."/>
            <person name="Voet M."/>
            <person name="Volckaert G."/>
            <person name="Wambutt R."/>
            <person name="Watson M.D."/>
            <person name="Weber N."/>
            <person name="Wedler E."/>
            <person name="Wedler H."/>
            <person name="Wipfli P."/>
            <person name="Wolf K."/>
            <person name="Wright L.F."/>
            <person name="Zaccaria P."/>
            <person name="Zimmermann M."/>
            <person name="Zollner A."/>
            <person name="Kleine K."/>
        </authorList>
    </citation>
    <scope>NUCLEOTIDE SEQUENCE [LARGE SCALE GENOMIC DNA]</scope>
    <source>
        <strain>ATCC 204508 / S288c</strain>
    </source>
</reference>
<reference key="4">
    <citation type="journal article" date="2014" name="G3 (Bethesda)">
        <title>The reference genome sequence of Saccharomyces cerevisiae: Then and now.</title>
        <authorList>
            <person name="Engel S.R."/>
            <person name="Dietrich F.S."/>
            <person name="Fisk D.G."/>
            <person name="Binkley G."/>
            <person name="Balakrishnan R."/>
            <person name="Costanzo M.C."/>
            <person name="Dwight S.S."/>
            <person name="Hitz B.C."/>
            <person name="Karra K."/>
            <person name="Nash R.S."/>
            <person name="Weng S."/>
            <person name="Wong E.D."/>
            <person name="Lloyd P."/>
            <person name="Skrzypek M.S."/>
            <person name="Miyasato S.R."/>
            <person name="Simison M."/>
            <person name="Cherry J.M."/>
        </authorList>
    </citation>
    <scope>GENOME REANNOTATION</scope>
    <source>
        <strain>ATCC 204508 / S288c</strain>
    </source>
</reference>
<reference key="5">
    <citation type="journal article" date="2007" name="Proc. Natl. Acad. Sci. U.S.A.">
        <title>High-density yeast-tiling array reveals previously undiscovered introns and extensive regulation of meiotic splicing.</title>
        <authorList>
            <person name="Juneau K."/>
            <person name="Palm C."/>
            <person name="Miranda M."/>
            <person name="Davis R.W."/>
        </authorList>
    </citation>
    <scope>NUCLEOTIDE SEQUENCE [MRNA] OF 1-88</scope>
    <source>
        <strain>ATCC 201390 / BY4743</strain>
    </source>
</reference>
<reference key="6">
    <citation type="journal article" date="1998" name="Yeast">
        <title>The list of cytoplasmic ribosomal proteins of Saccharomyces cerevisiae.</title>
        <authorList>
            <person name="Planta R.J."/>
            <person name="Mager W.H."/>
        </authorList>
    </citation>
    <scope>NOMENCLATURE</scope>
    <scope>SUBUNIT</scope>
</reference>
<reference key="7">
    <citation type="journal article" date="2000" name="Nature">
        <title>A comprehensive analysis of protein-protein interactions in Saccharomyces cerevisiae.</title>
        <authorList>
            <person name="Uetz P."/>
            <person name="Giot L."/>
            <person name="Cagney G."/>
            <person name="Mansfield T.A."/>
            <person name="Judson R.S."/>
            <person name="Knight J.R."/>
            <person name="Lockshon D."/>
            <person name="Narayan V."/>
            <person name="Srinivasan M."/>
            <person name="Pochart P."/>
            <person name="Qureshi-Emili A."/>
            <person name="Li Y."/>
            <person name="Godwin B."/>
            <person name="Conover D."/>
            <person name="Kalbfleisch T."/>
            <person name="Vijayadamodar G."/>
            <person name="Yang M."/>
            <person name="Johnston M."/>
            <person name="Fields S."/>
            <person name="Rothberg J.M."/>
        </authorList>
    </citation>
    <scope>INTERACTION WITH TSR2</scope>
</reference>
<reference key="8">
    <citation type="journal article" date="2003" name="Cell">
        <title>A panoramic view of yeast noncoding RNA processing.</title>
        <authorList>
            <person name="Peng W.-T."/>
            <person name="Robinson M.D."/>
            <person name="Mnaimneh S."/>
            <person name="Krogan N.J."/>
            <person name="Cagney G."/>
            <person name="Morris Q.D."/>
            <person name="Davierwala A.P."/>
            <person name="Grigull J."/>
            <person name="Yang X."/>
            <person name="Zhang W."/>
            <person name="Mitsakakis N."/>
            <person name="Ryan O.W."/>
            <person name="Datta N."/>
            <person name="Jojic V."/>
            <person name="Pal C."/>
            <person name="Canadien V."/>
            <person name="Richards D.P."/>
            <person name="Beattie B."/>
            <person name="Wu L.F."/>
            <person name="Altschuler S.J."/>
            <person name="Roweis S."/>
            <person name="Frey B.J."/>
            <person name="Emili A."/>
            <person name="Greenblatt J.F."/>
            <person name="Hughes T.R."/>
        </authorList>
    </citation>
    <scope>INTERACTION WITH TSR2</scope>
</reference>
<reference key="9">
    <citation type="journal article" date="2003" name="Nature">
        <title>Global analysis of protein localization in budding yeast.</title>
        <authorList>
            <person name="Huh W.-K."/>
            <person name="Falvo J.V."/>
            <person name="Gerke L.C."/>
            <person name="Carroll A.S."/>
            <person name="Howson R.W."/>
            <person name="Weissman J.S."/>
            <person name="O'Shea E.K."/>
        </authorList>
    </citation>
    <scope>SUBCELLULAR LOCATION [LARGE SCALE ANALYSIS]</scope>
</reference>
<reference key="10">
    <citation type="journal article" date="2003" name="Nature">
        <title>Global analysis of protein expression in yeast.</title>
        <authorList>
            <person name="Ghaemmaghami S."/>
            <person name="Huh W.-K."/>
            <person name="Bower K."/>
            <person name="Howson R.W."/>
            <person name="Belle A."/>
            <person name="Dephoure N."/>
            <person name="O'Shea E.K."/>
            <person name="Weissman J.S."/>
        </authorList>
    </citation>
    <scope>LEVEL OF PROTEIN EXPRESSION [LARGE SCALE ANALYSIS]</scope>
</reference>
<reference key="11">
    <citation type="journal article" date="2014" name="Curr. Opin. Struct. Biol.">
        <title>A new system for naming ribosomal proteins.</title>
        <authorList>
            <person name="Ban N."/>
            <person name="Beckmann R."/>
            <person name="Cate J.H.D."/>
            <person name="Dinman J.D."/>
            <person name="Dragon F."/>
            <person name="Ellis S.R."/>
            <person name="Lafontaine D.L.J."/>
            <person name="Lindahl L."/>
            <person name="Liljas A."/>
            <person name="Lipton J.M."/>
            <person name="McAlear M.A."/>
            <person name="Moore P.B."/>
            <person name="Noller H.F."/>
            <person name="Ortega J."/>
            <person name="Panse V.G."/>
            <person name="Ramakrishnan V."/>
            <person name="Spahn C.M.T."/>
            <person name="Steitz T.A."/>
            <person name="Tchorzewski M."/>
            <person name="Tollervey D."/>
            <person name="Warren A.J."/>
            <person name="Williamson J.R."/>
            <person name="Wilson D."/>
            <person name="Yonath A."/>
            <person name="Yusupov M."/>
        </authorList>
    </citation>
    <scope>NOMENCLATURE</scope>
</reference>
<reference key="12">
    <citation type="journal article" date="2011" name="Science">
        <title>The structure of the eukaryotic ribosome at 3.0 A resolution.</title>
        <authorList>
            <person name="Ben-Shem A."/>
            <person name="Garreau de Loubresse N."/>
            <person name="Melnikov S."/>
            <person name="Jenner L."/>
            <person name="Yusupova G."/>
            <person name="Yusupov M."/>
        </authorList>
    </citation>
    <scope>X-RAY CRYSTALLOGRAPHY (3.00 ANGSTROMS) OF 80S RIBOSOME</scope>
    <scope>SUBUNIT</scope>
    <scope>SUBCELLULAR LOCATION</scope>
</reference>
<feature type="chain" id="PRO_0000204528" description="Small ribosomal subunit protein eS26A">
    <location>
        <begin position="1"/>
        <end position="119"/>
    </location>
</feature>
<feature type="region of interest" description="Disordered" evidence="1">
    <location>
        <begin position="1"/>
        <end position="20"/>
    </location>
</feature>
<feature type="region of interest" description="Disordered" evidence="1">
    <location>
        <begin position="88"/>
        <end position="119"/>
    </location>
</feature>
<feature type="compositionally biased region" description="Basic and acidic residues" evidence="1">
    <location>
        <begin position="103"/>
        <end position="119"/>
    </location>
</feature>
<feature type="turn" evidence="13">
    <location>
        <begin position="6"/>
        <end position="9"/>
    </location>
</feature>
<feature type="strand" evidence="13">
    <location>
        <begin position="20"/>
        <end position="22"/>
    </location>
</feature>
<feature type="strand" evidence="13">
    <location>
        <begin position="24"/>
        <end position="26"/>
    </location>
</feature>
<feature type="strand" evidence="13">
    <location>
        <begin position="29"/>
        <end position="31"/>
    </location>
</feature>
<feature type="strand" evidence="13">
    <location>
        <begin position="38"/>
        <end position="43"/>
    </location>
</feature>
<feature type="turn" evidence="13">
    <location>
        <begin position="44"/>
        <end position="48"/>
    </location>
</feature>
<feature type="helix" evidence="13">
    <location>
        <begin position="50"/>
        <end position="55"/>
    </location>
</feature>
<feature type="strand" evidence="13">
    <location>
        <begin position="57"/>
        <end position="59"/>
    </location>
</feature>
<feature type="strand" evidence="13">
    <location>
        <begin position="66"/>
        <end position="71"/>
    </location>
</feature>
<feature type="helix" evidence="13">
    <location>
        <begin position="75"/>
        <end position="79"/>
    </location>
</feature>
<feature type="turn" evidence="13">
    <location>
        <begin position="80"/>
        <end position="82"/>
    </location>
</feature>
<feature type="turn" evidence="13">
    <location>
        <begin position="89"/>
        <end position="91"/>
    </location>
</feature>
<feature type="strand" evidence="12">
    <location>
        <begin position="105"/>
        <end position="107"/>
    </location>
</feature>
<feature type="turn" evidence="12">
    <location>
        <begin position="111"/>
        <end position="114"/>
    </location>
</feature>
<feature type="helix" evidence="12">
    <location>
        <begin position="115"/>
        <end position="118"/>
    </location>
</feature>
<organism>
    <name type="scientific">Saccharomyces cerevisiae (strain ATCC 204508 / S288c)</name>
    <name type="common">Baker's yeast</name>
    <dbReference type="NCBI Taxonomy" id="559292"/>
    <lineage>
        <taxon>Eukaryota</taxon>
        <taxon>Fungi</taxon>
        <taxon>Dikarya</taxon>
        <taxon>Ascomycota</taxon>
        <taxon>Saccharomycotina</taxon>
        <taxon>Saccharomycetes</taxon>
        <taxon>Saccharomycetales</taxon>
        <taxon>Saccharomycetaceae</taxon>
        <taxon>Saccharomyces</taxon>
    </lineage>
</organism>
<protein>
    <recommendedName>
        <fullName evidence="7">Small ribosomal subunit protein eS26A</fullName>
    </recommendedName>
    <alternativeName>
        <fullName evidence="8">40S ribosomal protein S26-A</fullName>
    </alternativeName>
</protein>
<name>RS26A_YEAST</name>
<evidence type="ECO:0000256" key="1">
    <source>
        <dbReference type="SAM" id="MobiDB-lite"/>
    </source>
</evidence>
<evidence type="ECO:0000269" key="2">
    <source>
    </source>
</evidence>
<evidence type="ECO:0000269" key="3">
    <source>
    </source>
</evidence>
<evidence type="ECO:0000269" key="4">
    <source>
    </source>
</evidence>
<evidence type="ECO:0000269" key="5">
    <source>
    </source>
</evidence>
<evidence type="ECO:0000269" key="6">
    <source>
    </source>
</evidence>
<evidence type="ECO:0000303" key="7">
    <source>
    </source>
</evidence>
<evidence type="ECO:0000303" key="8">
    <source>
    </source>
</evidence>
<evidence type="ECO:0000305" key="9"/>
<evidence type="ECO:0000305" key="10">
    <source>
    </source>
</evidence>
<evidence type="ECO:0000305" key="11">
    <source>
    </source>
</evidence>
<evidence type="ECO:0007829" key="12">
    <source>
        <dbReference type="PDB" id="6G04"/>
    </source>
</evidence>
<evidence type="ECO:0007829" key="13">
    <source>
        <dbReference type="PDB" id="8CAS"/>
    </source>
</evidence>
<accession>P39938</accession>
<accession>A2TBN5</accession>
<accession>D6VTW5</accession>
<sequence length="119" mass="13505">MPKKRASNGRNKKGRGHVKPVRCVNCSKSIPKDKAIKRMAIRNIVEAAAVRDLSEASVYPEYALPKTYNKLHYCVSCAIHARIVRVRSREDRKNRAPPQRPRFNRENKVSPADAAKKAL</sequence>
<comment type="function">
    <text evidence="10">Component of the ribosome, a large ribonucleoprotein complex responsible for the synthesis of proteins in the cell. The small ribosomal subunit (SSU) binds messenger RNAs (mRNAs) and translates the encoded message by selecting cognate aminoacyl-transfer RNA (tRNA) molecules. The large subunit (LSU) contains the ribosomal catalytic site termed the peptidyl transferase center (PTC), which catalyzes the formation of peptide bonds, thereby polymerizing the amino acids delivered by tRNAs into a polypeptide chain. The nascent polypeptides leave the ribosome through a tunnel in the LSU and interact with protein factors that function in enzymatic processing, targeting, and the membrane insertion of nascent chains at the exit of the ribosomal tunnel.</text>
</comment>
<comment type="subunit">
    <text evidence="2 3 6 11">Component of the small ribosomal subunit (SSU). Mature yeast ribosomes consist of a small (40S) and a large (60S) subunit. The 40S small subunit contains 1 molecule of ribosomal RNA (18S rRNA) and 33 different proteins (encoded by 57 genes). The large 60S subunit contains 3 rRNA molecules (25S, 5.8S and 5S rRNA) and 46 different proteins (encoded by 81 genes). eS26 interacts with eS1 forming part of the mRNA exit tunnel (PubMed:22096102, PubMed:9559554). eS26 interacts with TSR2 (PubMed:10688190, PubMed:12837249).</text>
</comment>
<comment type="subcellular location">
    <subcellularLocation>
        <location evidence="4 6">Cytoplasm</location>
    </subcellularLocation>
</comment>
<comment type="miscellaneous">
    <text evidence="5">Present with 16300 molecules/cell in log phase SD medium.</text>
</comment>
<comment type="miscellaneous">
    <text evidence="9">There are 2 genes for eS26 in yeast.</text>
</comment>
<comment type="similarity">
    <text evidence="9">Belongs to the eukaryotic ribosomal protein eS26 family.</text>
</comment>